<gene>
    <name evidence="1" type="primary">ribBA</name>
    <name type="synonym">ribA</name>
    <name type="ordered locus">SAR1851</name>
</gene>
<protein>
    <recommendedName>
        <fullName evidence="1">Riboflavin biosynthesis protein RibBA</fullName>
    </recommendedName>
    <domain>
        <recommendedName>
            <fullName evidence="1">3,4-dihydroxy-2-butanone 4-phosphate synthase</fullName>
            <shortName evidence="1">DHBP synthase</shortName>
            <ecNumber evidence="1">4.1.99.12</ecNumber>
        </recommendedName>
    </domain>
    <domain>
        <recommendedName>
            <fullName evidence="1">GTP cyclohydrolase-2</fullName>
            <ecNumber evidence="1">3.5.4.25</ecNumber>
        </recommendedName>
        <alternativeName>
            <fullName evidence="1">GTP cyclohydrolase II</fullName>
        </alternativeName>
    </domain>
</protein>
<evidence type="ECO:0000255" key="1">
    <source>
        <dbReference type="HAMAP-Rule" id="MF_01283"/>
    </source>
</evidence>
<accession>Q6GFT5</accession>
<feature type="chain" id="PRO_0000151736" description="Riboflavin biosynthesis protein RibBA">
    <location>
        <begin position="1"/>
        <end position="393"/>
    </location>
</feature>
<feature type="region of interest" description="DHBP synthase">
    <location>
        <begin position="1"/>
        <end position="200"/>
    </location>
</feature>
<feature type="region of interest" description="GTP cyclohydrolase II">
    <location>
        <begin position="201"/>
        <end position="393"/>
    </location>
</feature>
<feature type="active site" description="Proton acceptor; for GTP cyclohydrolase activity" evidence="1">
    <location>
        <position position="325"/>
    </location>
</feature>
<feature type="active site" description="Nucleophile; for GTP cyclohydrolase activity" evidence="1">
    <location>
        <position position="327"/>
    </location>
</feature>
<feature type="binding site" evidence="1">
    <location>
        <begin position="27"/>
        <end position="28"/>
    </location>
    <ligand>
        <name>D-ribulose 5-phosphate</name>
        <dbReference type="ChEBI" id="CHEBI:58121"/>
    </ligand>
</feature>
<feature type="binding site" evidence="1">
    <location>
        <position position="28"/>
    </location>
    <ligand>
        <name>Mg(2+)</name>
        <dbReference type="ChEBI" id="CHEBI:18420"/>
        <label>1</label>
    </ligand>
</feature>
<feature type="binding site" evidence="1">
    <location>
        <position position="28"/>
    </location>
    <ligand>
        <name>Mg(2+)</name>
        <dbReference type="ChEBI" id="CHEBI:18420"/>
        <label>2</label>
    </ligand>
</feature>
<feature type="binding site" evidence="1">
    <location>
        <position position="32"/>
    </location>
    <ligand>
        <name>D-ribulose 5-phosphate</name>
        <dbReference type="ChEBI" id="CHEBI:58121"/>
    </ligand>
</feature>
<feature type="binding site" evidence="1">
    <location>
        <begin position="139"/>
        <end position="143"/>
    </location>
    <ligand>
        <name>D-ribulose 5-phosphate</name>
        <dbReference type="ChEBI" id="CHEBI:58121"/>
    </ligand>
</feature>
<feature type="binding site" evidence="1">
    <location>
        <position position="142"/>
    </location>
    <ligand>
        <name>Mg(2+)</name>
        <dbReference type="ChEBI" id="CHEBI:18420"/>
        <label>2</label>
    </ligand>
</feature>
<feature type="binding site" evidence="1">
    <location>
        <position position="163"/>
    </location>
    <ligand>
        <name>D-ribulose 5-phosphate</name>
        <dbReference type="ChEBI" id="CHEBI:58121"/>
    </ligand>
</feature>
<feature type="binding site" evidence="1">
    <location>
        <begin position="249"/>
        <end position="253"/>
    </location>
    <ligand>
        <name>GTP</name>
        <dbReference type="ChEBI" id="CHEBI:37565"/>
    </ligand>
</feature>
<feature type="binding site" evidence="1">
    <location>
        <position position="254"/>
    </location>
    <ligand>
        <name>Zn(2+)</name>
        <dbReference type="ChEBI" id="CHEBI:29105"/>
        <note>catalytic</note>
    </ligand>
</feature>
<feature type="binding site" evidence="1">
    <location>
        <position position="265"/>
    </location>
    <ligand>
        <name>Zn(2+)</name>
        <dbReference type="ChEBI" id="CHEBI:29105"/>
        <note>catalytic</note>
    </ligand>
</feature>
<feature type="binding site" evidence="1">
    <location>
        <position position="267"/>
    </location>
    <ligand>
        <name>Zn(2+)</name>
        <dbReference type="ChEBI" id="CHEBI:29105"/>
        <note>catalytic</note>
    </ligand>
</feature>
<feature type="binding site" evidence="1">
    <location>
        <position position="270"/>
    </location>
    <ligand>
        <name>GTP</name>
        <dbReference type="ChEBI" id="CHEBI:37565"/>
    </ligand>
</feature>
<feature type="binding site" evidence="1">
    <location>
        <begin position="291"/>
        <end position="293"/>
    </location>
    <ligand>
        <name>GTP</name>
        <dbReference type="ChEBI" id="CHEBI:37565"/>
    </ligand>
</feature>
<feature type="binding site" evidence="1">
    <location>
        <position position="313"/>
    </location>
    <ligand>
        <name>GTP</name>
        <dbReference type="ChEBI" id="CHEBI:37565"/>
    </ligand>
</feature>
<feature type="binding site" evidence="1">
    <location>
        <position position="348"/>
    </location>
    <ligand>
        <name>GTP</name>
        <dbReference type="ChEBI" id="CHEBI:37565"/>
    </ligand>
</feature>
<feature type="binding site" evidence="1">
    <location>
        <position position="353"/>
    </location>
    <ligand>
        <name>GTP</name>
        <dbReference type="ChEBI" id="CHEBI:37565"/>
    </ligand>
</feature>
<feature type="site" description="Essential for DHBP synthase activity" evidence="1">
    <location>
        <position position="125"/>
    </location>
</feature>
<feature type="site" description="Essential for DHBP synthase activity" evidence="1">
    <location>
        <position position="163"/>
    </location>
</feature>
<keyword id="KW-0342">GTP-binding</keyword>
<keyword id="KW-0378">Hydrolase</keyword>
<keyword id="KW-0456">Lyase</keyword>
<keyword id="KW-0460">Magnesium</keyword>
<keyword id="KW-0464">Manganese</keyword>
<keyword id="KW-0479">Metal-binding</keyword>
<keyword id="KW-0511">Multifunctional enzyme</keyword>
<keyword id="KW-0547">Nucleotide-binding</keyword>
<keyword id="KW-0686">Riboflavin biosynthesis</keyword>
<keyword id="KW-0862">Zinc</keyword>
<dbReference type="EC" id="4.1.99.12" evidence="1"/>
<dbReference type="EC" id="3.5.4.25" evidence="1"/>
<dbReference type="EMBL" id="BX571856">
    <property type="protein sequence ID" value="CAG40842.1"/>
    <property type="molecule type" value="Genomic_DNA"/>
</dbReference>
<dbReference type="SMR" id="Q6GFT5"/>
<dbReference type="KEGG" id="sar:SAR1851"/>
<dbReference type="HOGENOM" id="CLU_020273_1_2_9"/>
<dbReference type="UniPathway" id="UPA00275">
    <property type="reaction ID" value="UER00399"/>
</dbReference>
<dbReference type="UniPathway" id="UPA00275">
    <property type="reaction ID" value="UER00400"/>
</dbReference>
<dbReference type="Proteomes" id="UP000000596">
    <property type="component" value="Chromosome"/>
</dbReference>
<dbReference type="GO" id="GO:0005829">
    <property type="term" value="C:cytosol"/>
    <property type="evidence" value="ECO:0007669"/>
    <property type="project" value="TreeGrafter"/>
</dbReference>
<dbReference type="GO" id="GO:0008686">
    <property type="term" value="F:3,4-dihydroxy-2-butanone-4-phosphate synthase activity"/>
    <property type="evidence" value="ECO:0007669"/>
    <property type="project" value="UniProtKB-UniRule"/>
</dbReference>
<dbReference type="GO" id="GO:0005525">
    <property type="term" value="F:GTP binding"/>
    <property type="evidence" value="ECO:0007669"/>
    <property type="project" value="UniProtKB-KW"/>
</dbReference>
<dbReference type="GO" id="GO:0003935">
    <property type="term" value="F:GTP cyclohydrolase II activity"/>
    <property type="evidence" value="ECO:0007669"/>
    <property type="project" value="UniProtKB-UniRule"/>
</dbReference>
<dbReference type="GO" id="GO:0000287">
    <property type="term" value="F:magnesium ion binding"/>
    <property type="evidence" value="ECO:0007669"/>
    <property type="project" value="UniProtKB-UniRule"/>
</dbReference>
<dbReference type="GO" id="GO:0030145">
    <property type="term" value="F:manganese ion binding"/>
    <property type="evidence" value="ECO:0007669"/>
    <property type="project" value="UniProtKB-UniRule"/>
</dbReference>
<dbReference type="GO" id="GO:0008270">
    <property type="term" value="F:zinc ion binding"/>
    <property type="evidence" value="ECO:0007669"/>
    <property type="project" value="UniProtKB-UniRule"/>
</dbReference>
<dbReference type="GO" id="GO:0009231">
    <property type="term" value="P:riboflavin biosynthetic process"/>
    <property type="evidence" value="ECO:0007669"/>
    <property type="project" value="UniProtKB-UniRule"/>
</dbReference>
<dbReference type="CDD" id="cd00641">
    <property type="entry name" value="GTP_cyclohydro2"/>
    <property type="match status" value="1"/>
</dbReference>
<dbReference type="FunFam" id="3.40.50.10990:FF:000002">
    <property type="entry name" value="GTP cyclohydrolase-2"/>
    <property type="match status" value="1"/>
</dbReference>
<dbReference type="FunFam" id="3.90.870.10:FF:000001">
    <property type="entry name" value="Riboflavin biosynthesis protein RibBA"/>
    <property type="match status" value="1"/>
</dbReference>
<dbReference type="Gene3D" id="3.90.870.10">
    <property type="entry name" value="DHBP synthase"/>
    <property type="match status" value="1"/>
</dbReference>
<dbReference type="Gene3D" id="3.40.50.10990">
    <property type="entry name" value="GTP cyclohydrolase II"/>
    <property type="match status" value="1"/>
</dbReference>
<dbReference type="HAMAP" id="MF_00179">
    <property type="entry name" value="RibA"/>
    <property type="match status" value="1"/>
</dbReference>
<dbReference type="HAMAP" id="MF_00180">
    <property type="entry name" value="RibB"/>
    <property type="match status" value="1"/>
</dbReference>
<dbReference type="HAMAP" id="MF_01283">
    <property type="entry name" value="RibBA"/>
    <property type="match status" value="1"/>
</dbReference>
<dbReference type="InterPro" id="IPR017945">
    <property type="entry name" value="DHBP_synth_RibB-like_a/b_dom"/>
</dbReference>
<dbReference type="InterPro" id="IPR000422">
    <property type="entry name" value="DHBP_synthase_RibB"/>
</dbReference>
<dbReference type="InterPro" id="IPR032677">
    <property type="entry name" value="GTP_cyclohydro_II"/>
</dbReference>
<dbReference type="InterPro" id="IPR000926">
    <property type="entry name" value="RibA"/>
</dbReference>
<dbReference type="InterPro" id="IPR036144">
    <property type="entry name" value="RibA-like_sf"/>
</dbReference>
<dbReference type="InterPro" id="IPR016299">
    <property type="entry name" value="Riboflavin_synth_RibBA"/>
</dbReference>
<dbReference type="NCBIfam" id="NF001591">
    <property type="entry name" value="PRK00393.1"/>
    <property type="match status" value="1"/>
</dbReference>
<dbReference type="NCBIfam" id="TIGR00505">
    <property type="entry name" value="ribA"/>
    <property type="match status" value="1"/>
</dbReference>
<dbReference type="NCBIfam" id="TIGR00506">
    <property type="entry name" value="ribB"/>
    <property type="match status" value="1"/>
</dbReference>
<dbReference type="PANTHER" id="PTHR21327:SF18">
    <property type="entry name" value="3,4-DIHYDROXY-2-BUTANONE 4-PHOSPHATE SYNTHASE"/>
    <property type="match status" value="1"/>
</dbReference>
<dbReference type="PANTHER" id="PTHR21327">
    <property type="entry name" value="GTP CYCLOHYDROLASE II-RELATED"/>
    <property type="match status" value="1"/>
</dbReference>
<dbReference type="Pfam" id="PF00926">
    <property type="entry name" value="DHBP_synthase"/>
    <property type="match status" value="1"/>
</dbReference>
<dbReference type="Pfam" id="PF00925">
    <property type="entry name" value="GTP_cyclohydro2"/>
    <property type="match status" value="1"/>
</dbReference>
<dbReference type="PIRSF" id="PIRSF001259">
    <property type="entry name" value="RibA"/>
    <property type="match status" value="1"/>
</dbReference>
<dbReference type="SUPFAM" id="SSF142695">
    <property type="entry name" value="RibA-like"/>
    <property type="match status" value="1"/>
</dbReference>
<dbReference type="SUPFAM" id="SSF55821">
    <property type="entry name" value="YrdC/RibB"/>
    <property type="match status" value="1"/>
</dbReference>
<organism>
    <name type="scientific">Staphylococcus aureus (strain MRSA252)</name>
    <dbReference type="NCBI Taxonomy" id="282458"/>
    <lineage>
        <taxon>Bacteria</taxon>
        <taxon>Bacillati</taxon>
        <taxon>Bacillota</taxon>
        <taxon>Bacilli</taxon>
        <taxon>Bacillales</taxon>
        <taxon>Staphylococcaceae</taxon>
        <taxon>Staphylococcus</taxon>
    </lineage>
</organism>
<reference key="1">
    <citation type="journal article" date="2004" name="Proc. Natl. Acad. Sci. U.S.A.">
        <title>Complete genomes of two clinical Staphylococcus aureus strains: evidence for the rapid evolution of virulence and drug resistance.</title>
        <authorList>
            <person name="Holden M.T.G."/>
            <person name="Feil E.J."/>
            <person name="Lindsay J.A."/>
            <person name="Peacock S.J."/>
            <person name="Day N.P.J."/>
            <person name="Enright M.C."/>
            <person name="Foster T.J."/>
            <person name="Moore C.E."/>
            <person name="Hurst L."/>
            <person name="Atkin R."/>
            <person name="Barron A."/>
            <person name="Bason N."/>
            <person name="Bentley S.D."/>
            <person name="Chillingworth C."/>
            <person name="Chillingworth T."/>
            <person name="Churcher C."/>
            <person name="Clark L."/>
            <person name="Corton C."/>
            <person name="Cronin A."/>
            <person name="Doggett J."/>
            <person name="Dowd L."/>
            <person name="Feltwell T."/>
            <person name="Hance Z."/>
            <person name="Harris B."/>
            <person name="Hauser H."/>
            <person name="Holroyd S."/>
            <person name="Jagels K."/>
            <person name="James K.D."/>
            <person name="Lennard N."/>
            <person name="Line A."/>
            <person name="Mayes R."/>
            <person name="Moule S."/>
            <person name="Mungall K."/>
            <person name="Ormond D."/>
            <person name="Quail M.A."/>
            <person name="Rabbinowitsch E."/>
            <person name="Rutherford K.M."/>
            <person name="Sanders M."/>
            <person name="Sharp S."/>
            <person name="Simmonds M."/>
            <person name="Stevens K."/>
            <person name="Whitehead S."/>
            <person name="Barrell B.G."/>
            <person name="Spratt B.G."/>
            <person name="Parkhill J."/>
        </authorList>
    </citation>
    <scope>NUCLEOTIDE SEQUENCE [LARGE SCALE GENOMIC DNA]</scope>
    <source>
        <strain>MRSA252</strain>
    </source>
</reference>
<comment type="function">
    <text evidence="1">Catalyzes the conversion of D-ribulose 5-phosphate to formate and 3,4-dihydroxy-2-butanone 4-phosphate.</text>
</comment>
<comment type="function">
    <text evidence="1">Catalyzes the conversion of GTP to 2,5-diamino-6-ribosylamino-4(3H)-pyrimidinone 5'-phosphate (DARP), formate and pyrophosphate.</text>
</comment>
<comment type="catalytic activity">
    <reaction evidence="1">
        <text>D-ribulose 5-phosphate = (2S)-2-hydroxy-3-oxobutyl phosphate + formate + H(+)</text>
        <dbReference type="Rhea" id="RHEA:18457"/>
        <dbReference type="ChEBI" id="CHEBI:15378"/>
        <dbReference type="ChEBI" id="CHEBI:15740"/>
        <dbReference type="ChEBI" id="CHEBI:58121"/>
        <dbReference type="ChEBI" id="CHEBI:58830"/>
        <dbReference type="EC" id="4.1.99.12"/>
    </reaction>
</comment>
<comment type="catalytic activity">
    <reaction evidence="1">
        <text>GTP + 4 H2O = 2,5-diamino-6-hydroxy-4-(5-phosphoribosylamino)-pyrimidine + formate + 2 phosphate + 3 H(+)</text>
        <dbReference type="Rhea" id="RHEA:23704"/>
        <dbReference type="ChEBI" id="CHEBI:15377"/>
        <dbReference type="ChEBI" id="CHEBI:15378"/>
        <dbReference type="ChEBI" id="CHEBI:15740"/>
        <dbReference type="ChEBI" id="CHEBI:37565"/>
        <dbReference type="ChEBI" id="CHEBI:43474"/>
        <dbReference type="ChEBI" id="CHEBI:58614"/>
        <dbReference type="EC" id="3.5.4.25"/>
    </reaction>
</comment>
<comment type="cofactor">
    <cofactor evidence="1">
        <name>Mg(2+)</name>
        <dbReference type="ChEBI" id="CHEBI:18420"/>
    </cofactor>
    <cofactor evidence="1">
        <name>Mn(2+)</name>
        <dbReference type="ChEBI" id="CHEBI:29035"/>
    </cofactor>
    <text evidence="1">Binds 2 divalent metal cations per subunit. Magnesium or manganese.</text>
</comment>
<comment type="cofactor">
    <cofactor evidence="1">
        <name>Zn(2+)</name>
        <dbReference type="ChEBI" id="CHEBI:29105"/>
    </cofactor>
    <text evidence="1">Binds 1 zinc ion per subunit.</text>
</comment>
<comment type="pathway">
    <text evidence="1">Cofactor biosynthesis; riboflavin biosynthesis; 2-hydroxy-3-oxobutyl phosphate from D-ribulose 5-phosphate: step 1/1.</text>
</comment>
<comment type="pathway">
    <text evidence="1">Cofactor biosynthesis; riboflavin biosynthesis; 5-amino-6-(D-ribitylamino)uracil from GTP: step 1/4.</text>
</comment>
<comment type="similarity">
    <text evidence="1">In the N-terminal section; belongs to the DHBP synthase family.</text>
</comment>
<comment type="similarity">
    <text evidence="1">In the C-terminal section; belongs to the GTP cyclohydrolase II family.</text>
</comment>
<name>RIBBA_STAAR</name>
<proteinExistence type="inferred from homology"/>
<sequence>MQFDNIDSALMALKNGETIIVVDDENRENEGDLVAVTEWMNDNTINFMAKEARGLICAPVSKDIAQRLDLVQMVDDNSDIFGTQFTVSIDHVDTTTGISAYERTLTAKKLIDPSSEAKDFNRPGHLFPLVAQDKGVLARNGHTEAAVDLAKLTGAKPAGVICEIMNDDGTMAKGQDLQKFKEKHKLKMITIDDLIEYRKKLEPEIEFKAKVKMPTDFGTFDMYGFKATYTDEEIVVLTKGAIRQHENVRLHSACLTGDIFHSQRCDCGAQLESSMKYINEHGGMIIYLPQEGRGIGLLNKLRAYELIEQGYDTVTANLALGFDEDLRDYHIAAQILKYFNIEHINLLSNNPSKFEGLKQYGIDIAERIEVIVPETVHNHDYMETKKIKMGHLI</sequence>